<proteinExistence type="evidence at protein level"/>
<comment type="similarity">
    <text evidence="2">Belongs to the universal ribosomal protein uL1 family.</text>
</comment>
<feature type="chain" id="PRO_0000326198" description="Large ribosomal subunit protein uL1">
    <location>
        <begin position="1"/>
        <end position="217"/>
    </location>
</feature>
<feature type="modified residue" description="N6,N6-dimethyllysine; alternate" evidence="1">
    <location>
        <position position="122"/>
    </location>
</feature>
<feature type="modified residue" description="N6-methyllysine; alternate" evidence="1">
    <location>
        <position position="122"/>
    </location>
</feature>
<dbReference type="EMBL" id="AAFI02000019">
    <property type="protein sequence ID" value="EAL68937.1"/>
    <property type="molecule type" value="Genomic_DNA"/>
</dbReference>
<dbReference type="RefSeq" id="XP_642967.1">
    <property type="nucleotide sequence ID" value="XM_637875.1"/>
</dbReference>
<dbReference type="FunCoup" id="Q86L05">
    <property type="interactions" value="534"/>
</dbReference>
<dbReference type="STRING" id="44689.Q86L05"/>
<dbReference type="PaxDb" id="44689-DDB0229949"/>
<dbReference type="EnsemblProtists" id="EAL68937">
    <property type="protein sequence ID" value="EAL68937"/>
    <property type="gene ID" value="DDB_G0276871"/>
</dbReference>
<dbReference type="GeneID" id="8620839"/>
<dbReference type="KEGG" id="ddi:DDB_G0276871"/>
<dbReference type="dictyBase" id="DDB_G0276871">
    <property type="gene designation" value="rpl10a"/>
</dbReference>
<dbReference type="VEuPathDB" id="AmoebaDB:DDB_G0276871"/>
<dbReference type="eggNOG" id="KOG1570">
    <property type="taxonomic scope" value="Eukaryota"/>
</dbReference>
<dbReference type="HOGENOM" id="CLU_062853_3_0_1"/>
<dbReference type="InParanoid" id="Q86L05"/>
<dbReference type="OMA" id="GPRNKMP"/>
<dbReference type="PhylomeDB" id="Q86L05"/>
<dbReference type="Reactome" id="R-DDI-156827">
    <property type="pathway name" value="L13a-mediated translational silencing of Ceruloplasmin expression"/>
</dbReference>
<dbReference type="Reactome" id="R-DDI-1799339">
    <property type="pathway name" value="SRP-dependent cotranslational protein targeting to membrane"/>
</dbReference>
<dbReference type="Reactome" id="R-DDI-72689">
    <property type="pathway name" value="Formation of a pool of free 40S subunits"/>
</dbReference>
<dbReference type="Reactome" id="R-DDI-72706">
    <property type="pathway name" value="GTP hydrolysis and joining of the 60S ribosomal subunit"/>
</dbReference>
<dbReference type="Reactome" id="R-DDI-975956">
    <property type="pathway name" value="Nonsense Mediated Decay (NMD) independent of the Exon Junction Complex (EJC)"/>
</dbReference>
<dbReference type="Reactome" id="R-DDI-975957">
    <property type="pathway name" value="Nonsense Mediated Decay (NMD) enhanced by the Exon Junction Complex (EJC)"/>
</dbReference>
<dbReference type="PRO" id="PR:Q86L05"/>
<dbReference type="Proteomes" id="UP000002195">
    <property type="component" value="Chromosome 2"/>
</dbReference>
<dbReference type="GO" id="GO:0022625">
    <property type="term" value="C:cytosolic large ribosomal subunit"/>
    <property type="evidence" value="ECO:0000318"/>
    <property type="project" value="GO_Central"/>
</dbReference>
<dbReference type="GO" id="GO:0003723">
    <property type="term" value="F:RNA binding"/>
    <property type="evidence" value="ECO:0000318"/>
    <property type="project" value="GO_Central"/>
</dbReference>
<dbReference type="GO" id="GO:0003735">
    <property type="term" value="F:structural constituent of ribosome"/>
    <property type="evidence" value="ECO:0007669"/>
    <property type="project" value="InterPro"/>
</dbReference>
<dbReference type="GO" id="GO:0006412">
    <property type="term" value="P:translation"/>
    <property type="evidence" value="ECO:0007669"/>
    <property type="project" value="InterPro"/>
</dbReference>
<dbReference type="CDD" id="cd00403">
    <property type="entry name" value="Ribosomal_L1"/>
    <property type="match status" value="1"/>
</dbReference>
<dbReference type="FunFam" id="3.30.190.20:FF:000006">
    <property type="entry name" value="Ribosomal protein"/>
    <property type="match status" value="1"/>
</dbReference>
<dbReference type="FunFam" id="3.40.50.790:FF:000002">
    <property type="entry name" value="Ribosomal protein"/>
    <property type="match status" value="1"/>
</dbReference>
<dbReference type="FunFam" id="3.30.190.20:FF:000009">
    <property type="entry name" value="Ribosomal protein L10a"/>
    <property type="match status" value="1"/>
</dbReference>
<dbReference type="Gene3D" id="3.30.190.20">
    <property type="match status" value="1"/>
</dbReference>
<dbReference type="Gene3D" id="3.40.50.790">
    <property type="match status" value="1"/>
</dbReference>
<dbReference type="InterPro" id="IPR050257">
    <property type="entry name" value="eL8/uL1-like"/>
</dbReference>
<dbReference type="InterPro" id="IPR002143">
    <property type="entry name" value="Ribosomal_uL1"/>
</dbReference>
<dbReference type="InterPro" id="IPR023674">
    <property type="entry name" value="Ribosomal_uL1-like"/>
</dbReference>
<dbReference type="InterPro" id="IPR028364">
    <property type="entry name" value="Ribosomal_uL1/biogenesis"/>
</dbReference>
<dbReference type="InterPro" id="IPR016095">
    <property type="entry name" value="Ribosomal_uL1_3-a/b-sand"/>
</dbReference>
<dbReference type="PANTHER" id="PTHR23105">
    <property type="entry name" value="RIBOSOMAL PROTEIN L7AE FAMILY MEMBER"/>
    <property type="match status" value="1"/>
</dbReference>
<dbReference type="Pfam" id="PF00687">
    <property type="entry name" value="Ribosomal_L1"/>
    <property type="match status" value="1"/>
</dbReference>
<dbReference type="PIRSF" id="PIRSF002155">
    <property type="entry name" value="Ribosomal_L1"/>
    <property type="match status" value="1"/>
</dbReference>
<dbReference type="SUPFAM" id="SSF56808">
    <property type="entry name" value="Ribosomal protein L1"/>
    <property type="match status" value="1"/>
</dbReference>
<name>RL10A_DICDI</name>
<evidence type="ECO:0000269" key="1">
    <source ref="3"/>
</evidence>
<evidence type="ECO:0000305" key="2"/>
<reference key="1">
    <citation type="journal article" date="2002" name="Nature">
        <title>Sequence and analysis of chromosome 2 of Dictyostelium discoideum.</title>
        <authorList>
            <person name="Gloeckner G."/>
            <person name="Eichinger L."/>
            <person name="Szafranski K."/>
            <person name="Pachebat J.A."/>
            <person name="Bankier A.T."/>
            <person name="Dear P.H."/>
            <person name="Lehmann R."/>
            <person name="Baumgart C."/>
            <person name="Parra G."/>
            <person name="Abril J.F."/>
            <person name="Guigo R."/>
            <person name="Kumpf K."/>
            <person name="Tunggal B."/>
            <person name="Cox E.C."/>
            <person name="Quail M.A."/>
            <person name="Platzer M."/>
            <person name="Rosenthal A."/>
            <person name="Noegel A.A."/>
        </authorList>
    </citation>
    <scope>NUCLEOTIDE SEQUENCE [LARGE SCALE GENOMIC DNA]</scope>
    <source>
        <strain>AX4</strain>
    </source>
</reference>
<reference key="2">
    <citation type="journal article" date="2005" name="Nature">
        <title>The genome of the social amoeba Dictyostelium discoideum.</title>
        <authorList>
            <person name="Eichinger L."/>
            <person name="Pachebat J.A."/>
            <person name="Gloeckner G."/>
            <person name="Rajandream M.A."/>
            <person name="Sucgang R."/>
            <person name="Berriman M."/>
            <person name="Song J."/>
            <person name="Olsen R."/>
            <person name="Szafranski K."/>
            <person name="Xu Q."/>
            <person name="Tunggal B."/>
            <person name="Kummerfeld S."/>
            <person name="Madera M."/>
            <person name="Konfortov B.A."/>
            <person name="Rivero F."/>
            <person name="Bankier A.T."/>
            <person name="Lehmann R."/>
            <person name="Hamlin N."/>
            <person name="Davies R."/>
            <person name="Gaudet P."/>
            <person name="Fey P."/>
            <person name="Pilcher K."/>
            <person name="Chen G."/>
            <person name="Saunders D."/>
            <person name="Sodergren E.J."/>
            <person name="Davis P."/>
            <person name="Kerhornou A."/>
            <person name="Nie X."/>
            <person name="Hall N."/>
            <person name="Anjard C."/>
            <person name="Hemphill L."/>
            <person name="Bason N."/>
            <person name="Farbrother P."/>
            <person name="Desany B."/>
            <person name="Just E."/>
            <person name="Morio T."/>
            <person name="Rost R."/>
            <person name="Churcher C.M."/>
            <person name="Cooper J."/>
            <person name="Haydock S."/>
            <person name="van Driessche N."/>
            <person name="Cronin A."/>
            <person name="Goodhead I."/>
            <person name="Muzny D.M."/>
            <person name="Mourier T."/>
            <person name="Pain A."/>
            <person name="Lu M."/>
            <person name="Harper D."/>
            <person name="Lindsay R."/>
            <person name="Hauser H."/>
            <person name="James K.D."/>
            <person name="Quiles M."/>
            <person name="Madan Babu M."/>
            <person name="Saito T."/>
            <person name="Buchrieser C."/>
            <person name="Wardroper A."/>
            <person name="Felder M."/>
            <person name="Thangavelu M."/>
            <person name="Johnson D."/>
            <person name="Knights A."/>
            <person name="Loulseged H."/>
            <person name="Mungall K.L."/>
            <person name="Oliver K."/>
            <person name="Price C."/>
            <person name="Quail M.A."/>
            <person name="Urushihara H."/>
            <person name="Hernandez J."/>
            <person name="Rabbinowitsch E."/>
            <person name="Steffen D."/>
            <person name="Sanders M."/>
            <person name="Ma J."/>
            <person name="Kohara Y."/>
            <person name="Sharp S."/>
            <person name="Simmonds M.N."/>
            <person name="Spiegler S."/>
            <person name="Tivey A."/>
            <person name="Sugano S."/>
            <person name="White B."/>
            <person name="Walker D."/>
            <person name="Woodward J.R."/>
            <person name="Winckler T."/>
            <person name="Tanaka Y."/>
            <person name="Shaulsky G."/>
            <person name="Schleicher M."/>
            <person name="Weinstock G.M."/>
            <person name="Rosenthal A."/>
            <person name="Cox E.C."/>
            <person name="Chisholm R.L."/>
            <person name="Gibbs R.A."/>
            <person name="Loomis W.F."/>
            <person name="Platzer M."/>
            <person name="Kay R.R."/>
            <person name="Williams J.G."/>
            <person name="Dear P.H."/>
            <person name="Noegel A.A."/>
            <person name="Barrell B.G."/>
            <person name="Kuspa A."/>
        </authorList>
    </citation>
    <scope>NUCLEOTIDE SEQUENCE [LARGE SCALE GENOMIC DNA]</scope>
    <source>
        <strain>AX4</strain>
    </source>
</reference>
<reference key="3">
    <citation type="submission" date="2010-01" db="UniProtKB">
        <authorList>
            <person name="Bienvenut W.V."/>
            <person name="Veltman D.M."/>
            <person name="Insall R.H."/>
        </authorList>
    </citation>
    <scope>PROTEIN SEQUENCE OF 11-18; 79-90 AND 106-147</scope>
    <scope>METHYLATION AT LYS-122</scope>
    <scope>IDENTIFICATION BY MASS SPECTROMETRY</scope>
</reference>
<gene>
    <name type="primary">rpl10a</name>
    <name type="ORF">DDB_G0276871</name>
</gene>
<accession>Q86L05</accession>
<accession>Q550G5</accession>
<sequence length="217" mass="24340">MSKISSDQVRSIVSQLFKEAQESKRGFLETVELQINLKNYDTKKDKRFSGQIKIGTVTKPKLSVCVFADQQHCDEATKIGAEFMDIEALKKIGPKNKKAIKKLSKKYDAFLASESILRQVPKLLGPGLNKVGKFPTLLTHSEDMASKINDVKSTVKFQLKKVLCLAVAVGHIELTEREVATNIIQSINFLVSLLKKGWQNIKTLYVKTSMGPSHRVY</sequence>
<organism>
    <name type="scientific">Dictyostelium discoideum</name>
    <name type="common">Social amoeba</name>
    <dbReference type="NCBI Taxonomy" id="44689"/>
    <lineage>
        <taxon>Eukaryota</taxon>
        <taxon>Amoebozoa</taxon>
        <taxon>Evosea</taxon>
        <taxon>Eumycetozoa</taxon>
        <taxon>Dictyostelia</taxon>
        <taxon>Dictyosteliales</taxon>
        <taxon>Dictyosteliaceae</taxon>
        <taxon>Dictyostelium</taxon>
    </lineage>
</organism>
<protein>
    <recommendedName>
        <fullName evidence="2">Large ribosomal subunit protein uL1</fullName>
    </recommendedName>
    <alternativeName>
        <fullName>60S ribosomal protein L10a</fullName>
    </alternativeName>
</protein>
<keyword id="KW-0903">Direct protein sequencing</keyword>
<keyword id="KW-0488">Methylation</keyword>
<keyword id="KW-1185">Reference proteome</keyword>
<keyword id="KW-0687">Ribonucleoprotein</keyword>
<keyword id="KW-0689">Ribosomal protein</keyword>